<organism>
    <name type="scientific">Salmonella schwarzengrund (strain CVM19633)</name>
    <dbReference type="NCBI Taxonomy" id="439843"/>
    <lineage>
        <taxon>Bacteria</taxon>
        <taxon>Pseudomonadati</taxon>
        <taxon>Pseudomonadota</taxon>
        <taxon>Gammaproteobacteria</taxon>
        <taxon>Enterobacterales</taxon>
        <taxon>Enterobacteriaceae</taxon>
        <taxon>Salmonella</taxon>
    </lineage>
</organism>
<protein>
    <recommendedName>
        <fullName evidence="1">Methionyl-tRNA formyltransferase</fullName>
        <ecNumber evidence="1">2.1.2.9</ecNumber>
    </recommendedName>
</protein>
<comment type="function">
    <text evidence="1">Attaches a formyl group to the free amino group of methionyl-tRNA(fMet). The formyl group appears to play a dual role in the initiator identity of N-formylmethionyl-tRNA by promoting its recognition by IF2 and preventing the misappropriation of this tRNA by the elongation apparatus.</text>
</comment>
<comment type="catalytic activity">
    <reaction evidence="1">
        <text>L-methionyl-tRNA(fMet) + (6R)-10-formyltetrahydrofolate = N-formyl-L-methionyl-tRNA(fMet) + (6S)-5,6,7,8-tetrahydrofolate + H(+)</text>
        <dbReference type="Rhea" id="RHEA:24380"/>
        <dbReference type="Rhea" id="RHEA-COMP:9952"/>
        <dbReference type="Rhea" id="RHEA-COMP:9953"/>
        <dbReference type="ChEBI" id="CHEBI:15378"/>
        <dbReference type="ChEBI" id="CHEBI:57453"/>
        <dbReference type="ChEBI" id="CHEBI:78530"/>
        <dbReference type="ChEBI" id="CHEBI:78844"/>
        <dbReference type="ChEBI" id="CHEBI:195366"/>
        <dbReference type="EC" id="2.1.2.9"/>
    </reaction>
</comment>
<comment type="similarity">
    <text evidence="1">Belongs to the Fmt family.</text>
</comment>
<evidence type="ECO:0000255" key="1">
    <source>
        <dbReference type="HAMAP-Rule" id="MF_00182"/>
    </source>
</evidence>
<dbReference type="EC" id="2.1.2.9" evidence="1"/>
<dbReference type="EMBL" id="CP001127">
    <property type="protein sequence ID" value="ACF91341.1"/>
    <property type="molecule type" value="Genomic_DNA"/>
</dbReference>
<dbReference type="RefSeq" id="WP_001285165.1">
    <property type="nucleotide sequence ID" value="NC_011094.1"/>
</dbReference>
<dbReference type="SMR" id="B4TXB1"/>
<dbReference type="KEGG" id="sew:SeSA_A3604"/>
<dbReference type="HOGENOM" id="CLU_033347_1_2_6"/>
<dbReference type="Proteomes" id="UP000001865">
    <property type="component" value="Chromosome"/>
</dbReference>
<dbReference type="GO" id="GO:0005829">
    <property type="term" value="C:cytosol"/>
    <property type="evidence" value="ECO:0007669"/>
    <property type="project" value="TreeGrafter"/>
</dbReference>
<dbReference type="GO" id="GO:0004479">
    <property type="term" value="F:methionyl-tRNA formyltransferase activity"/>
    <property type="evidence" value="ECO:0007669"/>
    <property type="project" value="UniProtKB-UniRule"/>
</dbReference>
<dbReference type="CDD" id="cd08646">
    <property type="entry name" value="FMT_core_Met-tRNA-FMT_N"/>
    <property type="match status" value="1"/>
</dbReference>
<dbReference type="CDD" id="cd08704">
    <property type="entry name" value="Met_tRNA_FMT_C"/>
    <property type="match status" value="1"/>
</dbReference>
<dbReference type="FunFam" id="3.10.25.10:FF:000001">
    <property type="entry name" value="Methionyl-tRNA formyltransferase"/>
    <property type="match status" value="1"/>
</dbReference>
<dbReference type="FunFam" id="3.40.50.170:FF:000003">
    <property type="entry name" value="Methionyl-tRNA formyltransferase"/>
    <property type="match status" value="1"/>
</dbReference>
<dbReference type="Gene3D" id="3.10.25.10">
    <property type="entry name" value="Formyl transferase, C-terminal domain"/>
    <property type="match status" value="1"/>
</dbReference>
<dbReference type="Gene3D" id="3.40.50.170">
    <property type="entry name" value="Formyl transferase, N-terminal domain"/>
    <property type="match status" value="1"/>
</dbReference>
<dbReference type="HAMAP" id="MF_00182">
    <property type="entry name" value="Formyl_trans"/>
    <property type="match status" value="1"/>
</dbReference>
<dbReference type="InterPro" id="IPR005794">
    <property type="entry name" value="Fmt"/>
</dbReference>
<dbReference type="InterPro" id="IPR005793">
    <property type="entry name" value="Formyl_trans_C"/>
</dbReference>
<dbReference type="InterPro" id="IPR037022">
    <property type="entry name" value="Formyl_trans_C_sf"/>
</dbReference>
<dbReference type="InterPro" id="IPR002376">
    <property type="entry name" value="Formyl_transf_N"/>
</dbReference>
<dbReference type="InterPro" id="IPR036477">
    <property type="entry name" value="Formyl_transf_N_sf"/>
</dbReference>
<dbReference type="InterPro" id="IPR011034">
    <property type="entry name" value="Formyl_transferase-like_C_sf"/>
</dbReference>
<dbReference type="InterPro" id="IPR001555">
    <property type="entry name" value="GART_AS"/>
</dbReference>
<dbReference type="InterPro" id="IPR044135">
    <property type="entry name" value="Met-tRNA-FMT_C"/>
</dbReference>
<dbReference type="InterPro" id="IPR041711">
    <property type="entry name" value="Met-tRNA-FMT_N"/>
</dbReference>
<dbReference type="NCBIfam" id="TIGR00460">
    <property type="entry name" value="fmt"/>
    <property type="match status" value="1"/>
</dbReference>
<dbReference type="PANTHER" id="PTHR11138">
    <property type="entry name" value="METHIONYL-TRNA FORMYLTRANSFERASE"/>
    <property type="match status" value="1"/>
</dbReference>
<dbReference type="PANTHER" id="PTHR11138:SF5">
    <property type="entry name" value="METHIONYL-TRNA FORMYLTRANSFERASE, MITOCHONDRIAL"/>
    <property type="match status" value="1"/>
</dbReference>
<dbReference type="Pfam" id="PF02911">
    <property type="entry name" value="Formyl_trans_C"/>
    <property type="match status" value="1"/>
</dbReference>
<dbReference type="Pfam" id="PF00551">
    <property type="entry name" value="Formyl_trans_N"/>
    <property type="match status" value="1"/>
</dbReference>
<dbReference type="SUPFAM" id="SSF50486">
    <property type="entry name" value="FMT C-terminal domain-like"/>
    <property type="match status" value="1"/>
</dbReference>
<dbReference type="SUPFAM" id="SSF53328">
    <property type="entry name" value="Formyltransferase"/>
    <property type="match status" value="1"/>
</dbReference>
<dbReference type="PROSITE" id="PS00373">
    <property type="entry name" value="GART"/>
    <property type="match status" value="1"/>
</dbReference>
<keyword id="KW-0648">Protein biosynthesis</keyword>
<keyword id="KW-0808">Transferase</keyword>
<feature type="chain" id="PRO_1000098442" description="Methionyl-tRNA formyltransferase">
    <location>
        <begin position="1"/>
        <end position="315"/>
    </location>
</feature>
<feature type="binding site" evidence="1">
    <location>
        <begin position="113"/>
        <end position="116"/>
    </location>
    <ligand>
        <name>(6S)-5,6,7,8-tetrahydrofolate</name>
        <dbReference type="ChEBI" id="CHEBI:57453"/>
    </ligand>
</feature>
<reference key="1">
    <citation type="journal article" date="2011" name="J. Bacteriol.">
        <title>Comparative genomics of 28 Salmonella enterica isolates: evidence for CRISPR-mediated adaptive sublineage evolution.</title>
        <authorList>
            <person name="Fricke W.F."/>
            <person name="Mammel M.K."/>
            <person name="McDermott P.F."/>
            <person name="Tartera C."/>
            <person name="White D.G."/>
            <person name="Leclerc J.E."/>
            <person name="Ravel J."/>
            <person name="Cebula T.A."/>
        </authorList>
    </citation>
    <scope>NUCLEOTIDE SEQUENCE [LARGE SCALE GENOMIC DNA]</scope>
    <source>
        <strain>CVM19633</strain>
    </source>
</reference>
<sequence length="315" mass="34029">MSDSLRIIFAGTPDFAARHLDALLTSGHNVVGVFTQPDRPAGRGKKLMPSPVKVLAEEKGLPVFQPVSLRPQENQHLVADLHADVMVVVAYGLILPKAVLDMPRLGCINVHGSLLPRWRGAAPIQRSLWAGDAETGVTIMQMDVGLDTGDMLYKLACPITAEDTSGSLYNKLAELGPQGLITTLKQLADGTATPEAQNEALVTHAEKLSKEEARIDWSLSAAQLERCIRAFNPWPMSWLEIDGQPVKVWQASVIEDATQSLPGTILAATKQGIQVATGKGILNLLSLQPAGKKAMSAQDLLNSRREWFIPGNRLA</sequence>
<proteinExistence type="inferred from homology"/>
<accession>B4TXB1</accession>
<name>FMT_SALSV</name>
<gene>
    <name evidence="1" type="primary">fmt</name>
    <name type="ordered locus">SeSA_A3604</name>
</gene>